<reference key="1">
    <citation type="journal article" date="2013" name="BMC Genomics">
        <title>Genomics-driven discovery of the pneumocandin biosynthetic gene cluster in the fungus Glarea lozoyensis.</title>
        <authorList>
            <person name="Chen L."/>
            <person name="Yue Q."/>
            <person name="Zhang X."/>
            <person name="Xiang M."/>
            <person name="Wang C."/>
            <person name="Li S."/>
            <person name="Che Y."/>
            <person name="Ortiz-Lopez F.J."/>
            <person name="Bills G.F."/>
            <person name="Liu X."/>
            <person name="An Z."/>
        </authorList>
    </citation>
    <scope>NUCLEOTIDE SEQUENCE [LARGE SCALE GENOMIC DNA]</scope>
    <scope>IDENTIFICATION</scope>
    <scope>FUNCTION</scope>
    <source>
        <strain>ATCC 20868 / MF5171</strain>
    </source>
</reference>
<reference key="2">
    <citation type="journal article" date="2014" name="ChemBioChem">
        <title>Pneumocandin biosynthesis: involvement of a trans-selective proline hydroxylase.</title>
        <authorList>
            <person name="Houwaart S."/>
            <person name="Youssar L."/>
            <person name="Huettel W."/>
        </authorList>
    </citation>
    <scope>FUNCTION</scope>
</reference>
<reference key="3">
    <citation type="journal article" date="2015" name="ACS Chem. Biol.">
        <title>Genetic manipulation of the pneumocandin biosynthetic pathway for generation of analogues and evaluation of their antifungal activity.</title>
        <authorList>
            <person name="Li Y."/>
            <person name="Chen L."/>
            <person name="Yue Q."/>
            <person name="Liu X."/>
            <person name="An Z."/>
            <person name="Bills G.F."/>
        </authorList>
    </citation>
    <scope>FUNCTION</scope>
    <scope>PATHWAY</scope>
    <scope>BIOTECHNOLOGY</scope>
</reference>
<reference key="4">
    <citation type="journal article" date="2015" name="Appl. Environ. Microbiol.">
        <title>Engineering of Glarea lozoyensis for exclusive production of the pneumocandin B0 precursor of the antifungal drug caspofungin acetate.</title>
        <authorList>
            <person name="Chen L."/>
            <person name="Yue Q."/>
            <person name="Li Y."/>
            <person name="Niu X."/>
            <person name="Xiang M."/>
            <person name="Wang W."/>
            <person name="Bills G.F."/>
            <person name="Liu X."/>
            <person name="An Z."/>
        </authorList>
    </citation>
    <scope>FUNCTION</scope>
    <scope>BIOTECHNOLOGY</scope>
</reference>
<reference key="5">
    <citation type="journal article" date="2016" name="ACS Chem. Biol.">
        <title>Engineering of new pneumocandin side-chain analogues from Glarea lozoyensis by mutasynthesis and evaluation of their antifungal activity.</title>
        <authorList>
            <person name="Chen L."/>
            <person name="Li Y."/>
            <person name="Yue Q."/>
            <person name="Loksztejn A."/>
            <person name="Yokoyama K."/>
            <person name="Felix E.A."/>
            <person name="Liu X."/>
            <person name="Zhang N."/>
            <person name="An Z."/>
            <person name="Bills G.F."/>
        </authorList>
    </citation>
    <scope>FUNCTION</scope>
    <scope>BIOTECHNOLOGY</scope>
</reference>
<reference key="6">
    <citation type="journal article" date="2018" name="Appl. Environ. Microbiol.">
        <title>Cryptic production of trans-3-hydroxyproline in echinocandin B biosynthesis.</title>
        <authorList>
            <person name="Mattay J."/>
            <person name="Houwaart S."/>
            <person name="Huettel W."/>
        </authorList>
    </citation>
    <scope>FUNCTION</scope>
</reference>
<reference key="7">
    <citation type="journal article" date="2017" name="Z. Naturforsch. C">
        <title>Structural diversity in echinocandin biosynthesis: the impact of oxidation steps and approaches toward an evolutionary explanation.</title>
        <authorList>
            <person name="Huettel W."/>
        </authorList>
    </citation>
    <scope>REVIEW</scope>
</reference>
<proteinExistence type="evidence at protein level"/>
<keyword id="KW-0028">Amino-acid biosynthesis</keyword>
<keyword id="KW-0032">Aminotransferase</keyword>
<keyword id="KW-0100">Branched-chain amino acid biosynthesis</keyword>
<keyword id="KW-0663">Pyridoxal phosphate</keyword>
<keyword id="KW-1185">Reference proteome</keyword>
<keyword id="KW-0808">Transferase</keyword>
<organism>
    <name type="scientific">Glarea lozoyensis (strain ATCC 20868 / MF5171)</name>
    <dbReference type="NCBI Taxonomy" id="1116229"/>
    <lineage>
        <taxon>Eukaryota</taxon>
        <taxon>Fungi</taxon>
        <taxon>Dikarya</taxon>
        <taxon>Ascomycota</taxon>
        <taxon>Pezizomycotina</taxon>
        <taxon>Leotiomycetes</taxon>
        <taxon>Helotiales</taxon>
        <taxon>Helotiaceae</taxon>
        <taxon>Glarea</taxon>
    </lineage>
</organism>
<sequence>MTENFPLPPLLGVDWDHLGFEPLEVNGHVECTFSTTTSCWTEPVFVTNPYLPVHGLAPGLNYGQQIFEGMKAFRNPSGDVQLFRPDQNALRFARSALRVAIPPVPTDLFLRAVNTAVGMNTDFVPPHGTGASLYIRPMAFASSPTVGLFLASQFKFCVYVLPVSPLHGKATQEGASVLVIEDFDRAAPLGTGNVKVGGNYGPVLGLIDEAKKQGFNLTLHLDSLSHSLIDEFSTSGFIGVLNDGEVPTIVVSDSQQVVSSITVDSICELARAFDWHVQKRPISFLEVARFSEVYAAGTAAVLVPVESILRRSTGEHVVYSVEYSSPTSCFSRLSTALRDIQQGLVPDDRSWIKLVTKP</sequence>
<protein>
    <recommendedName>
        <fullName evidence="2">Branched-chain amino acid aminotransferase gloG</fullName>
        <ecNumber evidence="2">2.6.1.42</ecNumber>
    </recommendedName>
    <alternativeName>
        <fullName evidence="9">L-homotyrosine biosynthesis sub-cluster protein gloG</fullName>
    </alternativeName>
    <alternativeName>
        <fullName evidence="10">Pneumocandin biosynthesis cluster protein G</fullName>
    </alternativeName>
</protein>
<accession>S3DQP8</accession>
<name>GLOG_GLAL2</name>
<comment type="function">
    <text evidence="4 5 6 7 8 12">Branched-chain amino acid aminotransferase; part of the gene cluster that mediates the biosynthesis of pneumocandins, lipohexapeptides of the echinocandin family that prevent fungal cell wall formation by non-competitive inhibition of beta-1,3-glucan synthase (PubMed:27705900). The 10,12-dimethylmyristoyl side chain is synthesized by the reducing polyketide synthase gloL/GLPKS4 (PubMed:27494047). The thioesterase gloN/GLHYD exclusively interacts with gloL/GLPKS4 to maintain turnover of the polyketide side chain (PubMed:27494047). The 10R,12S-dimethylmyristic acid is then transferred to the first thiolation domain of the nonribosomal peptide synthetase gloA/GLNRPS4 by the acyl-AMP ligase gloD/GLligase, followed by its acylation to L-ornithine to trigger elongation of the cyclic hexapeptide (PubMed:27494047). L-ornithine, 4R-hydroxyl-L-proline (generated from L-proline by the dioxygenase gloF/GLOXY2), 3S-hydroxyl-L-homotyrosine (generated by gloG/GLHtyB, gloH/GLHtyA, gloI/GLHtyC, gloJ/GLHtyD and hydroxylated at C-3 by the dioxygenase gloM/GLOXY1), 3R-hydroxyl-L-glutamine (generated from L-glutamine probably by the dioxygenase gloE/GLOXY3) and 3S-hydroxyl-L-proline (generated from L-proline by the dioxygenase gloF/GLOXY2 to yield pneumocandin B0), or 3S-hydroxyl-4S-methyl-L-proline (generated from L-leucine by the dioxygenase gloC/GLOXY4 to yield pneumocandin A0) are sequentially added to the growing chain (PubMed:25270390, PubMed:25527531, PubMed:25879325). The last C domain of gloA/GLNRPS4 is proposed to be responsible for cyclization by condensation to form the peptide bond between L-ornithine and 3S-hydroxyl-4S-methyl-L-proline (for pneumocandin A0) or 3S-hydroxyl-L-proline (for pneumocandin B0). Finally, the subsequent C-4 hydroxylation of 3S-hydroxyl-L-homotyrosine and L-ornithine dihydroxylation at C-4 and C-5 are performed by the cytochrome P450 monooxygenases gloP/GLP450-1 and gloO/GLP450-2, respectively (PubMed:25879325).</text>
</comment>
<comment type="catalytic activity">
    <reaction evidence="1">
        <text>L-isoleucine + 2-oxoglutarate = (S)-3-methyl-2-oxopentanoate + L-glutamate</text>
        <dbReference type="Rhea" id="RHEA:24801"/>
        <dbReference type="ChEBI" id="CHEBI:16810"/>
        <dbReference type="ChEBI" id="CHEBI:29985"/>
        <dbReference type="ChEBI" id="CHEBI:35146"/>
        <dbReference type="ChEBI" id="CHEBI:58045"/>
        <dbReference type="EC" id="2.6.1.42"/>
    </reaction>
</comment>
<comment type="catalytic activity">
    <reaction evidence="1">
        <text>L-leucine + 2-oxoglutarate = 4-methyl-2-oxopentanoate + L-glutamate</text>
        <dbReference type="Rhea" id="RHEA:18321"/>
        <dbReference type="ChEBI" id="CHEBI:16810"/>
        <dbReference type="ChEBI" id="CHEBI:17865"/>
        <dbReference type="ChEBI" id="CHEBI:29985"/>
        <dbReference type="ChEBI" id="CHEBI:57427"/>
        <dbReference type="EC" id="2.6.1.42"/>
    </reaction>
</comment>
<comment type="catalytic activity">
    <reaction evidence="1">
        <text>L-valine + 2-oxoglutarate = 3-methyl-2-oxobutanoate + L-glutamate</text>
        <dbReference type="Rhea" id="RHEA:24813"/>
        <dbReference type="ChEBI" id="CHEBI:11851"/>
        <dbReference type="ChEBI" id="CHEBI:16810"/>
        <dbReference type="ChEBI" id="CHEBI:29985"/>
        <dbReference type="ChEBI" id="CHEBI:57762"/>
        <dbReference type="EC" id="2.6.1.42"/>
    </reaction>
</comment>
<comment type="cofactor">
    <cofactor evidence="3">
        <name>pyridoxal 5'-phosphate</name>
        <dbReference type="ChEBI" id="CHEBI:597326"/>
    </cofactor>
</comment>
<comment type="pathway">
    <text evidence="14">Mycotoxin biosynthesis.</text>
</comment>
<comment type="biotechnology">
    <text evidence="5 6 7">Pneumocandin B0 is the starting molecule for the first semisynthetic echinocandin antifungal drug, caspofungin acetate (PubMed:25527531). Pneumocandin B0 is a minor fermentation product, and its industrial production was achieved by a combination of extensive mutation and medium optimization (PubMed:25527531). Inactivation of three of gloP/GLP450-1, gloO/GLP450-2, and gloM/GLOXY1 generates 13 different pneumocandin analogs that lack one, two, three, or four hydroxyl groups on 4R,5R-dihydroxy-ornithine and 3S,4S-dihydroxy-homotyrosine of the parent hexapeptide (PubMed:25879325). All of these cyclic lipopeptides show potent antifungal activities, and two new metabolites pneumocandins F and G are more potent in vitro against Candida species and Aspergillus fumigatus than the principal fermentation products, pneumocandins A0 and B0 (PubMed:25879325). Moreover, feeding alternative side chain precursors yields acrophiarin and 4 additional pneumocandin congeners with straight C14, C15, and C16 side chains. One of those compounds, pneumocandin I, has elevated antifungal activity and similar hemolytic activity compared to pneumocandin B0, the starting molecule for caspofungin, demonstrating the potential for using gloD/GLligase for future engineering of new echinocandin analogs (PubMed:27494047).</text>
</comment>
<comment type="similarity">
    <text evidence="13">Belongs to the class-IV pyridoxal-phosphate-dependent aminotransferase family.</text>
</comment>
<evidence type="ECO:0000250" key="1">
    <source>
        <dbReference type="UniProtKB" id="K7QHS5"/>
    </source>
</evidence>
<evidence type="ECO:0000250" key="2">
    <source>
        <dbReference type="UniProtKB" id="P19938"/>
    </source>
</evidence>
<evidence type="ECO:0000255" key="3">
    <source>
        <dbReference type="RuleBase" id="RU004516"/>
    </source>
</evidence>
<evidence type="ECO:0000269" key="4">
    <source>
    </source>
</evidence>
<evidence type="ECO:0000269" key="5">
    <source>
    </source>
</evidence>
<evidence type="ECO:0000269" key="6">
    <source>
    </source>
</evidence>
<evidence type="ECO:0000269" key="7">
    <source>
    </source>
</evidence>
<evidence type="ECO:0000269" key="8">
    <source>
    </source>
</evidence>
<evidence type="ECO:0000303" key="9">
    <source>
    </source>
</evidence>
<evidence type="ECO:0000303" key="10">
    <source>
    </source>
</evidence>
<evidence type="ECO:0000303" key="11">
    <source>
    </source>
</evidence>
<evidence type="ECO:0000303" key="12">
    <source>
    </source>
</evidence>
<evidence type="ECO:0000305" key="13"/>
<evidence type="ECO:0000305" key="14">
    <source>
    </source>
</evidence>
<feature type="chain" id="PRO_0000444486" description="Branched-chain amino acid aminotransferase gloG">
    <location>
        <begin position="1"/>
        <end position="358"/>
    </location>
</feature>
<feature type="active site" description="Proton acceptor" evidence="2">
    <location>
        <position position="195"/>
    </location>
</feature>
<feature type="binding site" evidence="2">
    <location>
        <position position="91"/>
    </location>
    <ligand>
        <name>pyridoxal 5'-phosphate</name>
        <dbReference type="ChEBI" id="CHEBI:597326"/>
    </ligand>
</feature>
<feature type="binding site" evidence="2">
    <location>
        <position position="231"/>
    </location>
    <ligand>
        <name>pyridoxal 5'-phosphate</name>
        <dbReference type="ChEBI" id="CHEBI:597326"/>
    </ligand>
</feature>
<feature type="modified residue" description="N6-(pyridoxal phosphate)lysine" evidence="2">
    <location>
        <position position="195"/>
    </location>
</feature>
<gene>
    <name evidence="10" type="primary">gloG</name>
    <name evidence="11" type="synonym">GLHtyB</name>
    <name type="ORF">GLAREA_10040</name>
</gene>
<dbReference type="EC" id="2.6.1.42" evidence="2"/>
<dbReference type="EMBL" id="KE145356">
    <property type="protein sequence ID" value="EPE34346.1"/>
    <property type="molecule type" value="Genomic_DNA"/>
</dbReference>
<dbReference type="RefSeq" id="XP_008078281.1">
    <property type="nucleotide sequence ID" value="XM_008080090.1"/>
</dbReference>
<dbReference type="SMR" id="S3DQP8"/>
<dbReference type="STRING" id="1116229.S3DQP8"/>
<dbReference type="GeneID" id="19469087"/>
<dbReference type="KEGG" id="glz:GLAREA_10040"/>
<dbReference type="eggNOG" id="KOG0975">
    <property type="taxonomic scope" value="Eukaryota"/>
</dbReference>
<dbReference type="HOGENOM" id="CLU_031922_1_0_1"/>
<dbReference type="OrthoDB" id="409992at2759"/>
<dbReference type="Proteomes" id="UP000016922">
    <property type="component" value="Unassembled WGS sequence"/>
</dbReference>
<dbReference type="GO" id="GO:0052656">
    <property type="term" value="F:L-isoleucine-2-oxoglutarate transaminase activity"/>
    <property type="evidence" value="ECO:0007669"/>
    <property type="project" value="RHEA"/>
</dbReference>
<dbReference type="GO" id="GO:0052654">
    <property type="term" value="F:L-leucine-2-oxoglutarate transaminase activity"/>
    <property type="evidence" value="ECO:0007669"/>
    <property type="project" value="RHEA"/>
</dbReference>
<dbReference type="GO" id="GO:0052655">
    <property type="term" value="F:L-valine-2-oxoglutarate transaminase activity"/>
    <property type="evidence" value="ECO:0007669"/>
    <property type="project" value="RHEA"/>
</dbReference>
<dbReference type="GO" id="GO:0008652">
    <property type="term" value="P:amino acid biosynthetic process"/>
    <property type="evidence" value="ECO:0007669"/>
    <property type="project" value="UniProtKB-KW"/>
</dbReference>
<dbReference type="GO" id="GO:0009082">
    <property type="term" value="P:branched-chain amino acid biosynthetic process"/>
    <property type="evidence" value="ECO:0007669"/>
    <property type="project" value="UniProtKB-KW"/>
</dbReference>
<dbReference type="Gene3D" id="3.30.470.10">
    <property type="match status" value="1"/>
</dbReference>
<dbReference type="Gene3D" id="3.20.10.10">
    <property type="entry name" value="D-amino Acid Aminotransferase, subunit A, domain 2"/>
    <property type="match status" value="1"/>
</dbReference>
<dbReference type="InterPro" id="IPR001544">
    <property type="entry name" value="Aminotrans_IV"/>
</dbReference>
<dbReference type="InterPro" id="IPR036038">
    <property type="entry name" value="Aminotransferase-like"/>
</dbReference>
<dbReference type="InterPro" id="IPR005786">
    <property type="entry name" value="B_amino_transII"/>
</dbReference>
<dbReference type="InterPro" id="IPR043132">
    <property type="entry name" value="BCAT-like_C"/>
</dbReference>
<dbReference type="InterPro" id="IPR043131">
    <property type="entry name" value="BCAT-like_N"/>
</dbReference>
<dbReference type="PANTHER" id="PTHR42825">
    <property type="entry name" value="AMINO ACID AMINOTRANSFERASE"/>
    <property type="match status" value="1"/>
</dbReference>
<dbReference type="PANTHER" id="PTHR42825:SF2">
    <property type="entry name" value="BRANCHED-CHAIN-AMINO-ACID AMINOTRANSFERASE 3, CHLOROPLASTIC-RELATED"/>
    <property type="match status" value="1"/>
</dbReference>
<dbReference type="Pfam" id="PF01063">
    <property type="entry name" value="Aminotran_4"/>
    <property type="match status" value="1"/>
</dbReference>
<dbReference type="PIRSF" id="PIRSF006468">
    <property type="entry name" value="BCAT1"/>
    <property type="match status" value="1"/>
</dbReference>
<dbReference type="SUPFAM" id="SSF56752">
    <property type="entry name" value="D-aminoacid aminotransferase-like PLP-dependent enzymes"/>
    <property type="match status" value="1"/>
</dbReference>